<accession>B0T369</accession>
<comment type="function">
    <text evidence="1">Phosphorolytic 3'-5' exoribonuclease that plays an important role in tRNA 3'-end maturation. Removes nucleotide residues following the 3'-CCA terminus of tRNAs; can also add nucleotides to the ends of RNA molecules by using nucleoside diphosphates as substrates, but this may not be physiologically important. Probably plays a role in initiation of 16S rRNA degradation (leading to ribosome degradation) during starvation.</text>
</comment>
<comment type="catalytic activity">
    <reaction evidence="1">
        <text>tRNA(n+1) + phosphate = tRNA(n) + a ribonucleoside 5'-diphosphate</text>
        <dbReference type="Rhea" id="RHEA:10628"/>
        <dbReference type="Rhea" id="RHEA-COMP:17343"/>
        <dbReference type="Rhea" id="RHEA-COMP:17344"/>
        <dbReference type="ChEBI" id="CHEBI:43474"/>
        <dbReference type="ChEBI" id="CHEBI:57930"/>
        <dbReference type="ChEBI" id="CHEBI:173114"/>
        <dbReference type="EC" id="2.7.7.56"/>
    </reaction>
</comment>
<comment type="subunit">
    <text evidence="1">Homohexameric ring arranged as a trimer of dimers.</text>
</comment>
<comment type="similarity">
    <text evidence="1">Belongs to the RNase PH family.</text>
</comment>
<dbReference type="EC" id="2.7.7.56" evidence="1"/>
<dbReference type="EMBL" id="CP000927">
    <property type="protein sequence ID" value="ABZ69304.1"/>
    <property type="molecule type" value="Genomic_DNA"/>
</dbReference>
<dbReference type="SMR" id="B0T369"/>
<dbReference type="STRING" id="366602.Caul_0167"/>
<dbReference type="KEGG" id="cak:Caul_0167"/>
<dbReference type="eggNOG" id="COG0689">
    <property type="taxonomic scope" value="Bacteria"/>
</dbReference>
<dbReference type="HOGENOM" id="CLU_050858_0_0_5"/>
<dbReference type="OrthoDB" id="9802265at2"/>
<dbReference type="GO" id="GO:0000175">
    <property type="term" value="F:3'-5'-RNA exonuclease activity"/>
    <property type="evidence" value="ECO:0007669"/>
    <property type="project" value="UniProtKB-UniRule"/>
</dbReference>
<dbReference type="GO" id="GO:0000049">
    <property type="term" value="F:tRNA binding"/>
    <property type="evidence" value="ECO:0007669"/>
    <property type="project" value="UniProtKB-UniRule"/>
</dbReference>
<dbReference type="GO" id="GO:0009022">
    <property type="term" value="F:tRNA nucleotidyltransferase activity"/>
    <property type="evidence" value="ECO:0007669"/>
    <property type="project" value="UniProtKB-UniRule"/>
</dbReference>
<dbReference type="GO" id="GO:0016075">
    <property type="term" value="P:rRNA catabolic process"/>
    <property type="evidence" value="ECO:0007669"/>
    <property type="project" value="UniProtKB-UniRule"/>
</dbReference>
<dbReference type="GO" id="GO:0006364">
    <property type="term" value="P:rRNA processing"/>
    <property type="evidence" value="ECO:0007669"/>
    <property type="project" value="UniProtKB-KW"/>
</dbReference>
<dbReference type="GO" id="GO:0008033">
    <property type="term" value="P:tRNA processing"/>
    <property type="evidence" value="ECO:0007669"/>
    <property type="project" value="UniProtKB-UniRule"/>
</dbReference>
<dbReference type="CDD" id="cd11362">
    <property type="entry name" value="RNase_PH_bact"/>
    <property type="match status" value="1"/>
</dbReference>
<dbReference type="FunFam" id="3.30.230.70:FF:000003">
    <property type="entry name" value="Ribonuclease PH"/>
    <property type="match status" value="1"/>
</dbReference>
<dbReference type="Gene3D" id="3.30.230.70">
    <property type="entry name" value="GHMP Kinase, N-terminal domain"/>
    <property type="match status" value="1"/>
</dbReference>
<dbReference type="HAMAP" id="MF_00564">
    <property type="entry name" value="RNase_PH"/>
    <property type="match status" value="1"/>
</dbReference>
<dbReference type="InterPro" id="IPR001247">
    <property type="entry name" value="ExoRNase_PH_dom1"/>
</dbReference>
<dbReference type="InterPro" id="IPR015847">
    <property type="entry name" value="ExoRNase_PH_dom2"/>
</dbReference>
<dbReference type="InterPro" id="IPR036345">
    <property type="entry name" value="ExoRNase_PH_dom2_sf"/>
</dbReference>
<dbReference type="InterPro" id="IPR027408">
    <property type="entry name" value="PNPase/RNase_PH_dom_sf"/>
</dbReference>
<dbReference type="InterPro" id="IPR020568">
    <property type="entry name" value="Ribosomal_Su5_D2-typ_SF"/>
</dbReference>
<dbReference type="InterPro" id="IPR050080">
    <property type="entry name" value="RNase_PH"/>
</dbReference>
<dbReference type="InterPro" id="IPR002381">
    <property type="entry name" value="RNase_PH_bac-type"/>
</dbReference>
<dbReference type="InterPro" id="IPR018336">
    <property type="entry name" value="RNase_PH_CS"/>
</dbReference>
<dbReference type="NCBIfam" id="TIGR01966">
    <property type="entry name" value="RNasePH"/>
    <property type="match status" value="1"/>
</dbReference>
<dbReference type="PANTHER" id="PTHR11953">
    <property type="entry name" value="EXOSOME COMPLEX COMPONENT"/>
    <property type="match status" value="1"/>
</dbReference>
<dbReference type="PANTHER" id="PTHR11953:SF0">
    <property type="entry name" value="EXOSOME COMPLEX COMPONENT RRP41"/>
    <property type="match status" value="1"/>
</dbReference>
<dbReference type="Pfam" id="PF01138">
    <property type="entry name" value="RNase_PH"/>
    <property type="match status" value="1"/>
</dbReference>
<dbReference type="Pfam" id="PF03725">
    <property type="entry name" value="RNase_PH_C"/>
    <property type="match status" value="1"/>
</dbReference>
<dbReference type="SUPFAM" id="SSF55666">
    <property type="entry name" value="Ribonuclease PH domain 2-like"/>
    <property type="match status" value="1"/>
</dbReference>
<dbReference type="SUPFAM" id="SSF54211">
    <property type="entry name" value="Ribosomal protein S5 domain 2-like"/>
    <property type="match status" value="1"/>
</dbReference>
<dbReference type="PROSITE" id="PS01277">
    <property type="entry name" value="RIBONUCLEASE_PH"/>
    <property type="match status" value="1"/>
</dbReference>
<name>RNPH_CAUSK</name>
<proteinExistence type="inferred from homology"/>
<sequence length="242" mass="26244">MRPSERAPDVLRVVTLETGVNRYAEGSCLISFGHTKVLVTATVEENVPGWMRNKGAGWVTAEYGMLPRATHTRGRREAALGKQSGRTQEIQRLIGRSLRAVVDLKALGERQISLDCDVLQADGGTRTAAITGAWVALRIAVNYLLEEGVLKTDPIVGQVAAVSCGVFKDTPVLDLDYEEDSQAEADSNFVLTNVGDIVEIQATGEKRGFTRGEFEQLFALAEKGIGELFVKQLEAVSAAKPR</sequence>
<evidence type="ECO:0000255" key="1">
    <source>
        <dbReference type="HAMAP-Rule" id="MF_00564"/>
    </source>
</evidence>
<gene>
    <name evidence="1" type="primary">rph</name>
    <name type="ordered locus">Caul_0167</name>
</gene>
<organism>
    <name type="scientific">Caulobacter sp. (strain K31)</name>
    <dbReference type="NCBI Taxonomy" id="366602"/>
    <lineage>
        <taxon>Bacteria</taxon>
        <taxon>Pseudomonadati</taxon>
        <taxon>Pseudomonadota</taxon>
        <taxon>Alphaproteobacteria</taxon>
        <taxon>Caulobacterales</taxon>
        <taxon>Caulobacteraceae</taxon>
        <taxon>Caulobacter</taxon>
    </lineage>
</organism>
<reference key="1">
    <citation type="submission" date="2008-01" db="EMBL/GenBank/DDBJ databases">
        <title>Complete sequence of chromosome of Caulobacter sp. K31.</title>
        <authorList>
            <consortium name="US DOE Joint Genome Institute"/>
            <person name="Copeland A."/>
            <person name="Lucas S."/>
            <person name="Lapidus A."/>
            <person name="Barry K."/>
            <person name="Glavina del Rio T."/>
            <person name="Dalin E."/>
            <person name="Tice H."/>
            <person name="Pitluck S."/>
            <person name="Bruce D."/>
            <person name="Goodwin L."/>
            <person name="Thompson L.S."/>
            <person name="Brettin T."/>
            <person name="Detter J.C."/>
            <person name="Han C."/>
            <person name="Schmutz J."/>
            <person name="Larimer F."/>
            <person name="Land M."/>
            <person name="Hauser L."/>
            <person name="Kyrpides N."/>
            <person name="Kim E."/>
            <person name="Stephens C."/>
            <person name="Richardson P."/>
        </authorList>
    </citation>
    <scope>NUCLEOTIDE SEQUENCE [LARGE SCALE GENOMIC DNA]</scope>
    <source>
        <strain>K31</strain>
    </source>
</reference>
<keyword id="KW-0548">Nucleotidyltransferase</keyword>
<keyword id="KW-0694">RNA-binding</keyword>
<keyword id="KW-0698">rRNA processing</keyword>
<keyword id="KW-0808">Transferase</keyword>
<keyword id="KW-0819">tRNA processing</keyword>
<keyword id="KW-0820">tRNA-binding</keyword>
<feature type="chain" id="PRO_1000082285" description="Ribonuclease PH">
    <location>
        <begin position="1"/>
        <end position="242"/>
    </location>
</feature>
<feature type="binding site" evidence="1">
    <location>
        <position position="86"/>
    </location>
    <ligand>
        <name>phosphate</name>
        <dbReference type="ChEBI" id="CHEBI:43474"/>
        <note>substrate</note>
    </ligand>
</feature>
<feature type="binding site" evidence="1">
    <location>
        <begin position="124"/>
        <end position="126"/>
    </location>
    <ligand>
        <name>phosphate</name>
        <dbReference type="ChEBI" id="CHEBI:43474"/>
        <note>substrate</note>
    </ligand>
</feature>
<protein>
    <recommendedName>
        <fullName evidence="1">Ribonuclease PH</fullName>
        <shortName evidence="1">RNase PH</shortName>
        <ecNumber evidence="1">2.7.7.56</ecNumber>
    </recommendedName>
    <alternativeName>
        <fullName evidence="1">tRNA nucleotidyltransferase</fullName>
    </alternativeName>
</protein>